<gene>
    <name evidence="1" type="primary">rpsC</name>
    <name type="ordered locus">ESA_00011</name>
</gene>
<keyword id="KW-1185">Reference proteome</keyword>
<keyword id="KW-0687">Ribonucleoprotein</keyword>
<keyword id="KW-0689">Ribosomal protein</keyword>
<keyword id="KW-0694">RNA-binding</keyword>
<keyword id="KW-0699">rRNA-binding</keyword>
<reference key="1">
    <citation type="journal article" date="2010" name="PLoS ONE">
        <title>Genome sequence of Cronobacter sakazakii BAA-894 and comparative genomic hybridization analysis with other Cronobacter species.</title>
        <authorList>
            <person name="Kucerova E."/>
            <person name="Clifton S.W."/>
            <person name="Xia X.Q."/>
            <person name="Long F."/>
            <person name="Porwollik S."/>
            <person name="Fulton L."/>
            <person name="Fronick C."/>
            <person name="Minx P."/>
            <person name="Kyung K."/>
            <person name="Warren W."/>
            <person name="Fulton R."/>
            <person name="Feng D."/>
            <person name="Wollam A."/>
            <person name="Shah N."/>
            <person name="Bhonagiri V."/>
            <person name="Nash W.E."/>
            <person name="Hallsworth-Pepin K."/>
            <person name="Wilson R.K."/>
            <person name="McClelland M."/>
            <person name="Forsythe S.J."/>
        </authorList>
    </citation>
    <scope>NUCLEOTIDE SEQUENCE [LARGE SCALE GENOMIC DNA]</scope>
    <source>
        <strain>ATCC BAA-894</strain>
    </source>
</reference>
<protein>
    <recommendedName>
        <fullName evidence="1">Small ribosomal subunit protein uS3</fullName>
    </recommendedName>
    <alternativeName>
        <fullName evidence="2">30S ribosomal protein S3</fullName>
    </alternativeName>
</protein>
<accession>A7MPI5</accession>
<organism>
    <name type="scientific">Cronobacter sakazakii (strain ATCC BAA-894)</name>
    <name type="common">Enterobacter sakazakii</name>
    <dbReference type="NCBI Taxonomy" id="290339"/>
    <lineage>
        <taxon>Bacteria</taxon>
        <taxon>Pseudomonadati</taxon>
        <taxon>Pseudomonadota</taxon>
        <taxon>Gammaproteobacteria</taxon>
        <taxon>Enterobacterales</taxon>
        <taxon>Enterobacteriaceae</taxon>
        <taxon>Cronobacter</taxon>
    </lineage>
</organism>
<sequence>MGQKVHPNGIRLGIVKPWNSTWFANTKEFADNLDSDFKVRQYLNKELAKASVSRIVIERPAKSIRVTIHTARPGIVIGKKGEDVEKLRKGVADIAGVPAQINIAEVRKPELDAKLVADSITSQLERRVMFRRAMKRAVQNAMRLGAKGIKVEVSGRLGGAEIARTEWYREGRVPLHTLRADIDYNTSEAHTTYGVIGVKVWIFKGEILGGMAAVEQPEKPAAQPKKQQRKGRK</sequence>
<name>RS3_CROS8</name>
<feature type="chain" id="PRO_1000086120" description="Small ribosomal subunit protein uS3">
    <location>
        <begin position="1"/>
        <end position="233"/>
    </location>
</feature>
<feature type="domain" description="KH type-2" evidence="1">
    <location>
        <begin position="39"/>
        <end position="107"/>
    </location>
</feature>
<proteinExistence type="inferred from homology"/>
<evidence type="ECO:0000255" key="1">
    <source>
        <dbReference type="HAMAP-Rule" id="MF_01309"/>
    </source>
</evidence>
<evidence type="ECO:0000305" key="2"/>
<comment type="function">
    <text evidence="1">Binds the lower part of the 30S subunit head. Binds mRNA in the 70S ribosome, positioning it for translation.</text>
</comment>
<comment type="subunit">
    <text evidence="1">Part of the 30S ribosomal subunit. Forms a tight complex with proteins S10 and S14.</text>
</comment>
<comment type="similarity">
    <text evidence="1">Belongs to the universal ribosomal protein uS3 family.</text>
</comment>
<dbReference type="EMBL" id="CP000783">
    <property type="protein sequence ID" value="ABU75320.1"/>
    <property type="molecule type" value="Genomic_DNA"/>
</dbReference>
<dbReference type="RefSeq" id="WP_004388607.1">
    <property type="nucleotide sequence ID" value="NC_009778.1"/>
</dbReference>
<dbReference type="SMR" id="A7MPI5"/>
<dbReference type="GeneID" id="92804596"/>
<dbReference type="KEGG" id="esa:ESA_00011"/>
<dbReference type="HOGENOM" id="CLU_058591_0_2_6"/>
<dbReference type="Proteomes" id="UP000000260">
    <property type="component" value="Chromosome"/>
</dbReference>
<dbReference type="GO" id="GO:0022627">
    <property type="term" value="C:cytosolic small ribosomal subunit"/>
    <property type="evidence" value="ECO:0007669"/>
    <property type="project" value="TreeGrafter"/>
</dbReference>
<dbReference type="GO" id="GO:0003729">
    <property type="term" value="F:mRNA binding"/>
    <property type="evidence" value="ECO:0007669"/>
    <property type="project" value="UniProtKB-UniRule"/>
</dbReference>
<dbReference type="GO" id="GO:0019843">
    <property type="term" value="F:rRNA binding"/>
    <property type="evidence" value="ECO:0007669"/>
    <property type="project" value="UniProtKB-UniRule"/>
</dbReference>
<dbReference type="GO" id="GO:0003735">
    <property type="term" value="F:structural constituent of ribosome"/>
    <property type="evidence" value="ECO:0007669"/>
    <property type="project" value="InterPro"/>
</dbReference>
<dbReference type="GO" id="GO:0006412">
    <property type="term" value="P:translation"/>
    <property type="evidence" value="ECO:0007669"/>
    <property type="project" value="UniProtKB-UniRule"/>
</dbReference>
<dbReference type="CDD" id="cd02412">
    <property type="entry name" value="KH-II_30S_S3"/>
    <property type="match status" value="1"/>
</dbReference>
<dbReference type="FunFam" id="3.30.1140.32:FF:000001">
    <property type="entry name" value="30S ribosomal protein S3"/>
    <property type="match status" value="1"/>
</dbReference>
<dbReference type="FunFam" id="3.30.300.20:FF:000001">
    <property type="entry name" value="30S ribosomal protein S3"/>
    <property type="match status" value="1"/>
</dbReference>
<dbReference type="Gene3D" id="3.30.300.20">
    <property type="match status" value="1"/>
</dbReference>
<dbReference type="Gene3D" id="3.30.1140.32">
    <property type="entry name" value="Ribosomal protein S3, C-terminal domain"/>
    <property type="match status" value="1"/>
</dbReference>
<dbReference type="HAMAP" id="MF_01309_B">
    <property type="entry name" value="Ribosomal_uS3_B"/>
    <property type="match status" value="1"/>
</dbReference>
<dbReference type="InterPro" id="IPR004087">
    <property type="entry name" value="KH_dom"/>
</dbReference>
<dbReference type="InterPro" id="IPR015946">
    <property type="entry name" value="KH_dom-like_a/b"/>
</dbReference>
<dbReference type="InterPro" id="IPR004044">
    <property type="entry name" value="KH_dom_type_2"/>
</dbReference>
<dbReference type="InterPro" id="IPR009019">
    <property type="entry name" value="KH_sf_prok-type"/>
</dbReference>
<dbReference type="InterPro" id="IPR036419">
    <property type="entry name" value="Ribosomal_S3_C_sf"/>
</dbReference>
<dbReference type="InterPro" id="IPR005704">
    <property type="entry name" value="Ribosomal_uS3_bac-typ"/>
</dbReference>
<dbReference type="InterPro" id="IPR001351">
    <property type="entry name" value="Ribosomal_uS3_C"/>
</dbReference>
<dbReference type="InterPro" id="IPR018280">
    <property type="entry name" value="Ribosomal_uS3_CS"/>
</dbReference>
<dbReference type="NCBIfam" id="TIGR01009">
    <property type="entry name" value="rpsC_bact"/>
    <property type="match status" value="1"/>
</dbReference>
<dbReference type="PANTHER" id="PTHR11760">
    <property type="entry name" value="30S/40S RIBOSOMAL PROTEIN S3"/>
    <property type="match status" value="1"/>
</dbReference>
<dbReference type="PANTHER" id="PTHR11760:SF19">
    <property type="entry name" value="SMALL RIBOSOMAL SUBUNIT PROTEIN US3C"/>
    <property type="match status" value="1"/>
</dbReference>
<dbReference type="Pfam" id="PF07650">
    <property type="entry name" value="KH_2"/>
    <property type="match status" value="1"/>
</dbReference>
<dbReference type="Pfam" id="PF00189">
    <property type="entry name" value="Ribosomal_S3_C"/>
    <property type="match status" value="1"/>
</dbReference>
<dbReference type="SMART" id="SM00322">
    <property type="entry name" value="KH"/>
    <property type="match status" value="1"/>
</dbReference>
<dbReference type="SUPFAM" id="SSF54814">
    <property type="entry name" value="Prokaryotic type KH domain (KH-domain type II)"/>
    <property type="match status" value="1"/>
</dbReference>
<dbReference type="SUPFAM" id="SSF54821">
    <property type="entry name" value="Ribosomal protein S3 C-terminal domain"/>
    <property type="match status" value="1"/>
</dbReference>
<dbReference type="PROSITE" id="PS50823">
    <property type="entry name" value="KH_TYPE_2"/>
    <property type="match status" value="1"/>
</dbReference>
<dbReference type="PROSITE" id="PS00548">
    <property type="entry name" value="RIBOSOMAL_S3"/>
    <property type="match status" value="1"/>
</dbReference>